<sequence>MAAVDLEKLRASGAGKAIGVLTSGGDAQGMNAAVRAVTRMGIYVGAKVFLIYEGYEGLVEGGENIKQANWLSVSNIIQLGGTIIGSARCKAFTTREGRRAAAYNLVQHGITNLCVIGGDGSLTGANIFRSEWGSLLEELVAEGKISETTARTYSHLNIAGLVGSIDNDFCGTDMTIGTDSALHRIMEVIDAITTTAQSHQRTFVLEVMGRHCGYLALVSALASGADWLFIPEAPPEDGWENFMCERLGETRSRGSRLNIIIIAEGAIDRNGKPISSSYVKDLVVQRLGFDTRVTVLGHVQRGGTPSAFDRILSSKMGMEAVMALLEATPDTPACVVTLSGNQSVRLPLMECVQMTKEVQKAMDDKRFDEATQLRGGSFENNWNIYKLLAHQKPPKEKSNFSLAILNVGAPAAGMNAAVRSAVRTGISHGHTVYVVHDGFEGLAKGQVQEVGWHDVAGWLGRGGSMLGTKRTLPKGQLESIVENIRIYGIHALLVVGGFEAYEGVLQLVEARGRYEELCIVMCVIPATISNNVPGTDFSLGSDTAVNAAMESCDRIKQSASGTKRRVFIVETMGGYCGYLATVTGIAVGADAAYVFEDPFNIHDLKVNVEHMTEKMKTDIQRGLVLRNEKCHDYYTTEFLYNLYSSEGKGVFDCRTNVLGHLQQGGAPTPFDRNYGTKLGVKAMLWLSEKLREVYRKGRVFANAPDSACVIGLKKKAVAFSPVTELKKDTDFEHRMPREQWWLSLRLMLKMLAQYRISMAAYVSGELEHVTRRTLSMDKGF</sequence>
<gene>
    <name evidence="11" type="primary">PFKL</name>
</gene>
<keyword id="KW-0002">3D-structure</keyword>
<keyword id="KW-0007">Acetylation</keyword>
<keyword id="KW-0021">Allosteric enzyme</keyword>
<keyword id="KW-0025">Alternative splicing</keyword>
<keyword id="KW-0067">ATP-binding</keyword>
<keyword id="KW-0963">Cytoplasm</keyword>
<keyword id="KW-0903">Direct protein sequencing</keyword>
<keyword id="KW-0324">Glycolysis</keyword>
<keyword id="KW-0325">Glycoprotein</keyword>
<keyword id="KW-0418">Kinase</keyword>
<keyword id="KW-0460">Magnesium</keyword>
<keyword id="KW-0479">Metal-binding</keyword>
<keyword id="KW-0547">Nucleotide-binding</keyword>
<keyword id="KW-0597">Phosphoprotein</keyword>
<keyword id="KW-1267">Proteomics identification</keyword>
<keyword id="KW-1185">Reference proteome</keyword>
<keyword id="KW-0808">Transferase</keyword>
<reference key="1">
    <citation type="journal article" date="1989" name="DNA">
        <title>The primary structure of human liver type phosphofructokinase and its comparison with other types of PFK.</title>
        <authorList>
            <person name="Levanon D."/>
            <person name="Danciger E."/>
            <person name="Dafni N."/>
            <person name="Bernstein Y."/>
            <person name="Elson A."/>
            <person name="Moens W."/>
            <person name="Brandeis M."/>
            <person name="Groner Y."/>
        </authorList>
    </citation>
    <scope>NUCLEOTIDE SEQUENCE [MRNA] (ISOFORM 1)</scope>
    <scope>VARIANT TRP-151</scope>
    <source>
        <tissue>Liver</tissue>
    </source>
</reference>
<reference key="2">
    <citation type="journal article" date="1990" name="Genomics">
        <title>The structure of the human liver-type phosphofructokinase gene.</title>
        <authorList>
            <person name="Elson A."/>
            <person name="Levanon D."/>
            <person name="Brandeis M."/>
            <person name="Dafni N."/>
            <person name="Bernstein Y."/>
            <person name="Danciger E."/>
            <person name="Groner Y."/>
        </authorList>
    </citation>
    <scope>NUCLEOTIDE SEQUENCE [GENOMIC DNA] (ISOFORM 1)</scope>
    <scope>VARIANT ALA-81</scope>
</reference>
<reference key="3">
    <citation type="journal article" date="2000" name="Nature">
        <title>The DNA sequence of human chromosome 21.</title>
        <authorList>
            <person name="Hattori M."/>
            <person name="Fujiyama A."/>
            <person name="Taylor T.D."/>
            <person name="Watanabe H."/>
            <person name="Yada T."/>
            <person name="Park H.-S."/>
            <person name="Toyoda A."/>
            <person name="Ishii K."/>
            <person name="Totoki Y."/>
            <person name="Choi D.-K."/>
            <person name="Groner Y."/>
            <person name="Soeda E."/>
            <person name="Ohki M."/>
            <person name="Takagi T."/>
            <person name="Sakaki Y."/>
            <person name="Taudien S."/>
            <person name="Blechschmidt K."/>
            <person name="Polley A."/>
            <person name="Menzel U."/>
            <person name="Delabar J."/>
            <person name="Kumpf K."/>
            <person name="Lehmann R."/>
            <person name="Patterson D."/>
            <person name="Reichwald K."/>
            <person name="Rump A."/>
            <person name="Schillhabel M."/>
            <person name="Schudy A."/>
            <person name="Zimmermann W."/>
            <person name="Rosenthal A."/>
            <person name="Kudoh J."/>
            <person name="Shibuya K."/>
            <person name="Kawasaki K."/>
            <person name="Asakawa S."/>
            <person name="Shintani A."/>
            <person name="Sasaki T."/>
            <person name="Nagamine K."/>
            <person name="Mitsuyama S."/>
            <person name="Antonarakis S.E."/>
            <person name="Minoshima S."/>
            <person name="Shimizu N."/>
            <person name="Nordsiek G."/>
            <person name="Hornischer K."/>
            <person name="Brandt P."/>
            <person name="Scharfe M."/>
            <person name="Schoen O."/>
            <person name="Desario A."/>
            <person name="Reichelt J."/>
            <person name="Kauer G."/>
            <person name="Bloecker H."/>
            <person name="Ramser J."/>
            <person name="Beck A."/>
            <person name="Klages S."/>
            <person name="Hennig S."/>
            <person name="Riesselmann L."/>
            <person name="Dagand E."/>
            <person name="Wehrmeyer S."/>
            <person name="Borzym K."/>
            <person name="Gardiner K."/>
            <person name="Nizetic D."/>
            <person name="Francis F."/>
            <person name="Lehrach H."/>
            <person name="Reinhardt R."/>
            <person name="Yaspo M.-L."/>
        </authorList>
    </citation>
    <scope>NUCLEOTIDE SEQUENCE [LARGE SCALE GENOMIC DNA]</scope>
</reference>
<reference key="4">
    <citation type="journal article" date="2004" name="Genome Res.">
        <title>The status, quality, and expansion of the NIH full-length cDNA project: the Mammalian Gene Collection (MGC).</title>
        <authorList>
            <consortium name="The MGC Project Team"/>
        </authorList>
    </citation>
    <scope>NUCLEOTIDE SEQUENCE [LARGE SCALE MRNA] (ISOFORMS 1 AND 2)</scope>
    <source>
        <tissue>Kidney</tissue>
        <tissue>Lung</tissue>
        <tissue>Muscle</tissue>
    </source>
</reference>
<reference key="5">
    <citation type="journal article" date="2003" name="Nat. Biotechnol.">
        <title>Exploring proteomes and analyzing protein processing by mass spectrometric identification of sorted N-terminal peptides.</title>
        <authorList>
            <person name="Gevaert K."/>
            <person name="Goethals M."/>
            <person name="Martens L."/>
            <person name="Van Damme J."/>
            <person name="Staes A."/>
            <person name="Thomas G.R."/>
            <person name="Vandekerckhove J."/>
        </authorList>
    </citation>
    <scope>PROTEIN SEQUENCE OF 2-10 (ISOFORM 1)</scope>
    <source>
        <tissue>Platelet</tissue>
    </source>
</reference>
<reference key="6">
    <citation type="submission" date="2009-07" db="UniProtKB">
        <authorList>
            <person name="Bienvenut W.V."/>
            <person name="Gao M."/>
            <person name="Leug H."/>
            <person name="Pchelintsev N."/>
            <person name="Adams P.D."/>
        </authorList>
    </citation>
    <scope>PROTEIN SEQUENCE OF 2-10; 17-35 AND 185-210</scope>
    <scope>CLEAVAGE OF INITIATOR METHIONINE</scope>
    <scope>ACETYLATION AT ALA-2</scope>
    <scope>IDENTIFICATION BY MASS SPECTROMETRY</scope>
    <source>
        <tissue>Prostatic carcinoma</tissue>
    </source>
</reference>
<reference key="7">
    <citation type="journal article" date="2008" name="Proc. Natl. Acad. Sci. U.S.A.">
        <title>A quantitative atlas of mitotic phosphorylation.</title>
        <authorList>
            <person name="Dephoure N."/>
            <person name="Zhou C."/>
            <person name="Villen J."/>
            <person name="Beausoleil S.A."/>
            <person name="Bakalarski C.E."/>
            <person name="Elledge S.J."/>
            <person name="Gygi S.P."/>
        </authorList>
    </citation>
    <scope>PHOSPHORYLATION [LARGE SCALE ANALYSIS] AT SER-775</scope>
    <scope>IDENTIFICATION BY MASS SPECTROMETRY [LARGE SCALE ANALYSIS]</scope>
    <source>
        <tissue>Cervix carcinoma</tissue>
    </source>
</reference>
<reference key="8">
    <citation type="journal article" date="2011" name="BMC Syst. Biol.">
        <title>Initial characterization of the human central proteome.</title>
        <authorList>
            <person name="Burkard T.R."/>
            <person name="Planyavsky M."/>
            <person name="Kaupe I."/>
            <person name="Breitwieser F.P."/>
            <person name="Buerckstuemmer T."/>
            <person name="Bennett K.L."/>
            <person name="Superti-Furga G."/>
            <person name="Colinge J."/>
        </authorList>
    </citation>
    <scope>IDENTIFICATION BY MASS SPECTROMETRY [LARGE SCALE ANALYSIS]</scope>
</reference>
<reference key="9">
    <citation type="journal article" date="2012" name="Mol. Cell. Proteomics">
        <title>Comparative large-scale characterisation of plant vs. mammal proteins reveals similar and idiosyncratic N-alpha acetylation features.</title>
        <authorList>
            <person name="Bienvenut W.V."/>
            <person name="Sumpton D."/>
            <person name="Martinez A."/>
            <person name="Lilla S."/>
            <person name="Espagne C."/>
            <person name="Meinnel T."/>
            <person name="Giglione C."/>
        </authorList>
    </citation>
    <scope>ACETYLATION [LARGE SCALE ANALYSIS] AT ALA-2</scope>
    <scope>CLEAVAGE OF INITIATOR METHIONINE [LARGE SCALE ANALYSIS]</scope>
    <scope>IDENTIFICATION BY MASS SPECTROMETRY [LARGE SCALE ANALYSIS]</scope>
</reference>
<reference key="10">
    <citation type="journal article" date="2012" name="Proc. Natl. Acad. Sci. U.S.A.">
        <title>N-terminal acetylome analyses and functional insights of the N-terminal acetyltransferase NatB.</title>
        <authorList>
            <person name="Van Damme P."/>
            <person name="Lasa M."/>
            <person name="Polevoda B."/>
            <person name="Gazquez C."/>
            <person name="Elosegui-Artola A."/>
            <person name="Kim D.S."/>
            <person name="De Juan-Pardo E."/>
            <person name="Demeyer K."/>
            <person name="Hole K."/>
            <person name="Larrea E."/>
            <person name="Timmerman E."/>
            <person name="Prieto J."/>
            <person name="Arnesen T."/>
            <person name="Sherman F."/>
            <person name="Gevaert K."/>
            <person name="Aldabe R."/>
        </authorList>
    </citation>
    <scope>ACETYLATION [LARGE SCALE ANALYSIS] AT ALA-2</scope>
    <scope>CLEAVAGE OF INITIATOR METHIONINE [LARGE SCALE ANALYSIS]</scope>
    <scope>IDENTIFICATION BY MASS SPECTROMETRY [LARGE SCALE ANALYSIS]</scope>
</reference>
<reference key="11">
    <citation type="journal article" date="2012" name="Science">
        <title>Phosphofructokinase 1 glycosylation regulates cell growth and metabolism.</title>
        <authorList>
            <person name="Yi W."/>
            <person name="Clark P.M."/>
            <person name="Mason D.E."/>
            <person name="Keenan M.C."/>
            <person name="Hill C."/>
            <person name="Goddard W.A. III"/>
            <person name="Peters E.C."/>
            <person name="Driggers E.M."/>
            <person name="Hsieh-Wilson L.C."/>
        </authorList>
    </citation>
    <scope>FUNCTION</scope>
    <scope>CATALYTIC ACTIVITY</scope>
    <scope>ACTIVITY REGULATION</scope>
    <scope>GLYCOSYLATION AT SER-529</scope>
    <scope>MUTAGENESIS OF THR-527 AND SER-529</scope>
</reference>
<reference key="12">
    <citation type="journal article" date="2014" name="J. Proteomics">
        <title>An enzyme assisted RP-RPLC approach for in-depth analysis of human liver phosphoproteome.</title>
        <authorList>
            <person name="Bian Y."/>
            <person name="Song C."/>
            <person name="Cheng K."/>
            <person name="Dong M."/>
            <person name="Wang F."/>
            <person name="Huang J."/>
            <person name="Sun D."/>
            <person name="Wang L."/>
            <person name="Ye M."/>
            <person name="Zou H."/>
        </authorList>
    </citation>
    <scope>IDENTIFICATION BY MASS SPECTROMETRY [LARGE SCALE ANALYSIS]</scope>
    <source>
        <tissue>Liver</tissue>
    </source>
</reference>
<comment type="function">
    <text evidence="1 3 5">Catalyzes the phosphorylation of D-fructose 6-phosphate to fructose 1,6-bisphosphate by ATP, the first committing step of glycolysis (PubMed:22923583). Negatively regulates the phagocyte oxidative burst in response to bacterial infection by controlling cellular NADPH biosynthesis and NADPH oxidase-derived reactive oxygen species. Upon macrophage activation, drives the metabolic switch toward glycolysis, thus preventing glucose turnover that produces NADPH via pentose phosphate pathway (By similarity).</text>
</comment>
<comment type="catalytic activity">
    <reaction evidence="3 5">
        <text>beta-D-fructose 6-phosphate + ATP = beta-D-fructose 1,6-bisphosphate + ADP + H(+)</text>
        <dbReference type="Rhea" id="RHEA:16109"/>
        <dbReference type="ChEBI" id="CHEBI:15378"/>
        <dbReference type="ChEBI" id="CHEBI:30616"/>
        <dbReference type="ChEBI" id="CHEBI:32966"/>
        <dbReference type="ChEBI" id="CHEBI:57634"/>
        <dbReference type="ChEBI" id="CHEBI:456216"/>
        <dbReference type="EC" id="2.7.1.11"/>
    </reaction>
</comment>
<comment type="cofactor">
    <cofactor>
        <name>Mg(2+)</name>
        <dbReference type="ChEBI" id="CHEBI:18420"/>
    </cofactor>
</comment>
<comment type="activity regulation">
    <text evidence="3 5">Allosterically activated by ADP, AMP, or fructose 2,6-bisphosphate, and allosterically inhibited by ATP or citrate. GlcNAcylation by OGT overcomes allosteric regulation.</text>
</comment>
<comment type="pathway">
    <text evidence="3">Carbohydrate degradation; glycolysis; D-glyceraldehyde 3-phosphate and glycerone phosphate from D-glucose: step 3/4.</text>
</comment>
<comment type="subunit">
    <text evidence="3 9">Homo- and heterotetramers (By similarity). Phosphofructokinase (PFK) enzyme functions as a tetramer composed of different combinations of 3 types of subunits, called PFKM (where M stands for Muscle), PFKL (Liver) and PFKP (Platelet). The composition of the PFK tetramer differs according to the tissue type it is present in. In muscles, it is composed of 4 PFKM subunits (also called M4). In the liver, the predominant form is a tetramer of PFKL subunits (L4). In erythrocytes, both PFKM and PFKL subunits randomly tetramerize to form M4, L4 and other combinations (ML3, M2L2, M3L). The kinetic and regulatory properties of the tetrameric enzyme are dependent on the subunit composition, hence can vary across tissues (Probable).</text>
</comment>
<comment type="interaction">
    <interactant intactId="EBI-487243">
        <id>P17858</id>
    </interactant>
    <interactant intactId="EBI-740290">
        <id>Q969Y2</id>
        <label>GTPBP3</label>
    </interactant>
    <organismsDiffer>false</organismsDiffer>
    <experiments>3</experiments>
</comment>
<comment type="interaction">
    <interactant intactId="EBI-487243">
        <id>P17858</id>
    </interactant>
    <interactant intactId="EBI-10172290">
        <id>P60409</id>
        <label>KRTAP10-7</label>
    </interactant>
    <organismsDiffer>false</organismsDiffer>
    <experiments>3</experiments>
</comment>
<comment type="interaction">
    <interactant intactId="EBI-487243">
        <id>P17858</id>
    </interactant>
    <interactant intactId="EBI-3958099">
        <id>P26371</id>
        <label>KRTAP5-9</label>
    </interactant>
    <organismsDiffer>false</organismsDiffer>
    <experiments>3</experiments>
</comment>
<comment type="interaction">
    <interactant intactId="EBI-487243">
        <id>P17858</id>
    </interactant>
    <interactant intactId="EBI-487243">
        <id>P17858</id>
        <label>PFKL</label>
    </interactant>
    <organismsDiffer>false</organismsDiffer>
    <experiments>3</experiments>
</comment>
<comment type="interaction">
    <interactant intactId="EBI-487243">
        <id>P17858</id>
    </interactant>
    <interactant intactId="EBI-514788">
        <id>P08237</id>
        <label>PFKM</label>
    </interactant>
    <organismsDiffer>false</organismsDiffer>
    <experiments>6</experiments>
</comment>
<comment type="subcellular location">
    <subcellularLocation>
        <location evidence="3">Cytoplasm</location>
    </subcellularLocation>
</comment>
<comment type="alternative products">
    <event type="alternative splicing"/>
    <isoform>
        <id>P17858-1</id>
        <name>1</name>
        <sequence type="displayed"/>
    </isoform>
    <isoform>
        <id>P17858-2</id>
        <name>2</name>
        <name>a</name>
        <sequence type="described" ref="VSP_011854"/>
    </isoform>
</comment>
<comment type="PTM">
    <text evidence="5">GlcNAcylation at Ser-529 by OGT decreases enzyme activity, leading to redirect glucose flux through the oxidative pentose phosphate pathway. Glycosylation is stimulated by both hypoxia and glucose deprivation.</text>
</comment>
<comment type="miscellaneous">
    <text>In human PFK exists as a system of 3 types of subunits, PFKM (muscle), PFKL (liver) and PFKP (platelet) isoenzymes.</text>
</comment>
<comment type="miscellaneous">
    <text evidence="10">Glycosylation may play a role in cancer cell proliferation: inhibition of 6-phosphofructokinase activity and subsequent redirection of the glucose flux through the oxidative pentose phosphate pathway confers a selective growth advantage on cancer cells. Moreover GlcNAcylation is observed in multiple cancer cell lines and tissue samples and GlcNAcylation leads to larger xenografts tunors in mice (PubMed:22923583).</text>
</comment>
<comment type="similarity">
    <text evidence="3">Belongs to the phosphofructokinase type A (PFKA) family. ATP-dependent PFK group I subfamily. Eukaryotic two domain clade 'E' sub-subfamily.</text>
</comment>
<evidence type="ECO:0000250" key="1">
    <source>
        <dbReference type="UniProtKB" id="P12382"/>
    </source>
</evidence>
<evidence type="ECO:0000250" key="2">
    <source>
        <dbReference type="UniProtKB" id="P47857"/>
    </source>
</evidence>
<evidence type="ECO:0000255" key="3">
    <source>
        <dbReference type="HAMAP-Rule" id="MF_03184"/>
    </source>
</evidence>
<evidence type="ECO:0000269" key="4">
    <source>
    </source>
</evidence>
<evidence type="ECO:0000269" key="5">
    <source>
    </source>
</evidence>
<evidence type="ECO:0000269" key="6">
    <source>
    </source>
</evidence>
<evidence type="ECO:0000269" key="7">
    <source ref="6"/>
</evidence>
<evidence type="ECO:0000303" key="8">
    <source>
    </source>
</evidence>
<evidence type="ECO:0000305" key="9"/>
<evidence type="ECO:0000305" key="10">
    <source>
    </source>
</evidence>
<evidence type="ECO:0000312" key="11">
    <source>
        <dbReference type="HGNC" id="HGNC:8876"/>
    </source>
</evidence>
<evidence type="ECO:0007744" key="12">
    <source>
    </source>
</evidence>
<evidence type="ECO:0007744" key="13">
    <source>
    </source>
</evidence>
<evidence type="ECO:0007744" key="14">
    <source>
    </source>
</evidence>
<evidence type="ECO:0007829" key="15">
    <source>
        <dbReference type="PDB" id="7LW1"/>
    </source>
</evidence>
<evidence type="ECO:0007829" key="16">
    <source>
        <dbReference type="PDB" id="8W2G"/>
    </source>
</evidence>
<evidence type="ECO:0007829" key="17">
    <source>
        <dbReference type="PDB" id="8W2H"/>
    </source>
</evidence>
<evidence type="ECO:0007829" key="18">
    <source>
        <dbReference type="PDB" id="8W2J"/>
    </source>
</evidence>
<name>PFKAL_HUMAN</name>
<proteinExistence type="evidence at protein level"/>
<protein>
    <recommendedName>
        <fullName evidence="3">ATP-dependent 6-phosphofructokinase, liver type</fullName>
        <shortName evidence="3">ATP-PFK</shortName>
        <shortName>PFK-L</shortName>
        <ecNumber evidence="3">2.7.1.11</ecNumber>
    </recommendedName>
    <alternativeName>
        <fullName>6-phosphofructokinase type B</fullName>
    </alternativeName>
    <alternativeName>
        <fullName>Phosphofructo-1-kinase isozyme B</fullName>
        <shortName>PFK-B</shortName>
    </alternativeName>
    <alternativeName>
        <fullName evidence="3">Phosphohexokinase</fullName>
    </alternativeName>
</protein>
<dbReference type="EC" id="2.7.1.11" evidence="3"/>
<dbReference type="EMBL" id="X15573">
    <property type="protein sequence ID" value="CAA33597.1"/>
    <property type="molecule type" value="mRNA"/>
</dbReference>
<dbReference type="EMBL" id="X16911">
    <property type="protein sequence ID" value="CAB46744.1"/>
    <property type="molecule type" value="Genomic_DNA"/>
</dbReference>
<dbReference type="EMBL" id="X16912">
    <property type="protein sequence ID" value="CAB46744.1"/>
    <property type="status" value="JOINED"/>
    <property type="molecule type" value="Genomic_DNA"/>
</dbReference>
<dbReference type="EMBL" id="X16913">
    <property type="protein sequence ID" value="CAB46744.1"/>
    <property type="status" value="JOINED"/>
    <property type="molecule type" value="Genomic_DNA"/>
</dbReference>
<dbReference type="EMBL" id="X16914">
    <property type="protein sequence ID" value="CAB46744.1"/>
    <property type="status" value="JOINED"/>
    <property type="molecule type" value="Genomic_DNA"/>
</dbReference>
<dbReference type="EMBL" id="X16915">
    <property type="protein sequence ID" value="CAB46744.1"/>
    <property type="status" value="JOINED"/>
    <property type="molecule type" value="Genomic_DNA"/>
</dbReference>
<dbReference type="EMBL" id="X16916">
    <property type="protein sequence ID" value="CAB46744.1"/>
    <property type="status" value="JOINED"/>
    <property type="molecule type" value="Genomic_DNA"/>
</dbReference>
<dbReference type="EMBL" id="X16917">
    <property type="protein sequence ID" value="CAB46744.1"/>
    <property type="status" value="JOINED"/>
    <property type="molecule type" value="Genomic_DNA"/>
</dbReference>
<dbReference type="EMBL" id="X16918">
    <property type="protein sequence ID" value="CAB46744.1"/>
    <property type="status" value="JOINED"/>
    <property type="molecule type" value="Genomic_DNA"/>
</dbReference>
<dbReference type="EMBL" id="X16919">
    <property type="protein sequence ID" value="CAB46744.1"/>
    <property type="status" value="JOINED"/>
    <property type="molecule type" value="Genomic_DNA"/>
</dbReference>
<dbReference type="EMBL" id="X16920">
    <property type="protein sequence ID" value="CAB46744.1"/>
    <property type="status" value="JOINED"/>
    <property type="molecule type" value="Genomic_DNA"/>
</dbReference>
<dbReference type="EMBL" id="X16921">
    <property type="protein sequence ID" value="CAB46744.1"/>
    <property type="status" value="JOINED"/>
    <property type="molecule type" value="Genomic_DNA"/>
</dbReference>
<dbReference type="EMBL" id="X16922">
    <property type="protein sequence ID" value="CAB46744.1"/>
    <property type="status" value="JOINED"/>
    <property type="molecule type" value="Genomic_DNA"/>
</dbReference>
<dbReference type="EMBL" id="X16923">
    <property type="protein sequence ID" value="CAB46744.1"/>
    <property type="status" value="JOINED"/>
    <property type="molecule type" value="Genomic_DNA"/>
</dbReference>
<dbReference type="EMBL" id="X16924">
    <property type="protein sequence ID" value="CAB46744.1"/>
    <property type="status" value="JOINED"/>
    <property type="molecule type" value="Genomic_DNA"/>
</dbReference>
<dbReference type="EMBL" id="X16925">
    <property type="protein sequence ID" value="CAB46744.1"/>
    <property type="status" value="JOINED"/>
    <property type="molecule type" value="Genomic_DNA"/>
</dbReference>
<dbReference type="EMBL" id="X16926">
    <property type="protein sequence ID" value="CAB46744.1"/>
    <property type="status" value="JOINED"/>
    <property type="molecule type" value="Genomic_DNA"/>
</dbReference>
<dbReference type="EMBL" id="X16927">
    <property type="protein sequence ID" value="CAB46744.1"/>
    <property type="status" value="JOINED"/>
    <property type="molecule type" value="Genomic_DNA"/>
</dbReference>
<dbReference type="EMBL" id="X16928">
    <property type="protein sequence ID" value="CAB46744.1"/>
    <property type="status" value="JOINED"/>
    <property type="molecule type" value="Genomic_DNA"/>
</dbReference>
<dbReference type="EMBL" id="X16929">
    <property type="protein sequence ID" value="CAB46744.1"/>
    <property type="status" value="JOINED"/>
    <property type="molecule type" value="Genomic_DNA"/>
</dbReference>
<dbReference type="EMBL" id="X16930">
    <property type="protein sequence ID" value="CAB46744.1"/>
    <property type="status" value="JOINED"/>
    <property type="molecule type" value="Genomic_DNA"/>
</dbReference>
<dbReference type="EMBL" id="AP001754">
    <property type="protein sequence ID" value="BAA95561.1"/>
    <property type="molecule type" value="Genomic_DNA"/>
</dbReference>
<dbReference type="EMBL" id="BC006422">
    <property type="protein sequence ID" value="AAH06422.1"/>
    <property type="molecule type" value="mRNA"/>
</dbReference>
<dbReference type="EMBL" id="BC007536">
    <property type="protein sequence ID" value="AAH07536.1"/>
    <property type="molecule type" value="mRNA"/>
</dbReference>
<dbReference type="EMBL" id="BC008964">
    <property type="protein sequence ID" value="AAH08964.1"/>
    <property type="molecule type" value="mRNA"/>
</dbReference>
<dbReference type="EMBL" id="BC009919">
    <property type="protein sequence ID" value="AAH09919.1"/>
    <property type="molecule type" value="mRNA"/>
</dbReference>
<dbReference type="CCDS" id="CCDS33582.1">
    <molecule id="P17858-1"/>
</dbReference>
<dbReference type="PIR" id="A33639">
    <property type="entry name" value="A33639"/>
</dbReference>
<dbReference type="RefSeq" id="NP_001002021.2">
    <property type="nucleotide sequence ID" value="NM_001002021.2"/>
</dbReference>
<dbReference type="RefSeq" id="NP_002617.3">
    <molecule id="P17858-1"/>
    <property type="nucleotide sequence ID" value="NM_002626.5"/>
</dbReference>
<dbReference type="PDB" id="7LW1">
    <property type="method" value="EM"/>
    <property type="resolution" value="2.90 A"/>
    <property type="chains" value="A/D/E/F=1-780"/>
</dbReference>
<dbReference type="PDB" id="8W2G">
    <property type="method" value="EM"/>
    <property type="resolution" value="3.00 A"/>
    <property type="chains" value="A/B/C/D=1-780"/>
</dbReference>
<dbReference type="PDB" id="8W2H">
    <property type="method" value="EM"/>
    <property type="resolution" value="2.60 A"/>
    <property type="chains" value="A/B/C/D=1-780"/>
</dbReference>
<dbReference type="PDB" id="8W2I">
    <property type="method" value="EM"/>
    <property type="resolution" value="3.60 A"/>
    <property type="chains" value="A/B/C/D/E/F/G/H=1-780"/>
</dbReference>
<dbReference type="PDB" id="8W2J">
    <property type="method" value="EM"/>
    <property type="resolution" value="3.10 A"/>
    <property type="chains" value="A/B/C/D/E/F/G/H=1-780"/>
</dbReference>
<dbReference type="PDBsum" id="7LW1"/>
<dbReference type="PDBsum" id="8W2G"/>
<dbReference type="PDBsum" id="8W2H"/>
<dbReference type="PDBsum" id="8W2I"/>
<dbReference type="PDBsum" id="8W2J"/>
<dbReference type="EMDB" id="EMD-23544"/>
<dbReference type="EMDB" id="EMD-43747"/>
<dbReference type="EMDB" id="EMD-43748"/>
<dbReference type="EMDB" id="EMD-43749"/>
<dbReference type="EMDB" id="EMD-43750"/>
<dbReference type="SMR" id="P17858"/>
<dbReference type="BioGRID" id="111232">
    <property type="interactions" value="213"/>
</dbReference>
<dbReference type="ComplexPortal" id="CPX-1998">
    <property type="entry name" value="6-phosphofructokinase, L4 homotetramer"/>
</dbReference>
<dbReference type="ComplexPortal" id="CPX-2000">
    <property type="entry name" value="6-phosphofructokinase, ML3 heterotetramer"/>
</dbReference>
<dbReference type="ComplexPortal" id="CPX-2001">
    <property type="entry name" value="6-phosphofructokinase, M2L2 heterotetramer"/>
</dbReference>
<dbReference type="ComplexPortal" id="CPX-2002">
    <property type="entry name" value="6-phosphofructokinase, M3L heterotetramer"/>
</dbReference>
<dbReference type="CORUM" id="P17858"/>
<dbReference type="FunCoup" id="P17858">
    <property type="interactions" value="1773"/>
</dbReference>
<dbReference type="IntAct" id="P17858">
    <property type="interactions" value="68"/>
</dbReference>
<dbReference type="MINT" id="P17858"/>
<dbReference type="STRING" id="9606.ENSP00000269848"/>
<dbReference type="ChEMBL" id="CHEMBL2191"/>
<dbReference type="GlyConnect" id="2022">
    <property type="glycosylation" value="1 N-Linked glycan (1 site)"/>
</dbReference>
<dbReference type="GlyCosmos" id="P17858">
    <property type="glycosylation" value="2 sites, 2 glycans"/>
</dbReference>
<dbReference type="GlyGen" id="P17858">
    <property type="glycosylation" value="3 sites, 5 N-linked glycans (1 site), 1 O-linked glycan (2 sites)"/>
</dbReference>
<dbReference type="iPTMnet" id="P17858"/>
<dbReference type="MetOSite" id="P17858"/>
<dbReference type="PhosphoSitePlus" id="P17858"/>
<dbReference type="SwissPalm" id="P17858"/>
<dbReference type="BioMuta" id="PFKL"/>
<dbReference type="DMDM" id="134048493"/>
<dbReference type="CPTAC" id="CPTAC-425"/>
<dbReference type="CPTAC" id="CPTAC-426"/>
<dbReference type="jPOST" id="P17858"/>
<dbReference type="MassIVE" id="P17858"/>
<dbReference type="PaxDb" id="9606-ENSP00000269848"/>
<dbReference type="PeptideAtlas" id="P17858"/>
<dbReference type="ProteomicsDB" id="53520">
    <molecule id="P17858-1"/>
</dbReference>
<dbReference type="ProteomicsDB" id="53521">
    <molecule id="P17858-2"/>
</dbReference>
<dbReference type="Pumba" id="P17858"/>
<dbReference type="TopDownProteomics" id="P17858-1">
    <molecule id="P17858-1"/>
</dbReference>
<dbReference type="Antibodypedia" id="24185">
    <property type="antibodies" value="317 antibodies from 34 providers"/>
</dbReference>
<dbReference type="DNASU" id="5211"/>
<dbReference type="Ensembl" id="ENST00000349048.9">
    <molecule id="P17858-1"/>
    <property type="protein sequence ID" value="ENSP00000269848.6"/>
    <property type="gene ID" value="ENSG00000141959.17"/>
</dbReference>
<dbReference type="GeneID" id="5211"/>
<dbReference type="KEGG" id="hsa:5211"/>
<dbReference type="MANE-Select" id="ENST00000349048.9">
    <property type="protein sequence ID" value="ENSP00000269848.6"/>
    <property type="RefSeq nucleotide sequence ID" value="NM_002626.6"/>
    <property type="RefSeq protein sequence ID" value="NP_002617.3"/>
</dbReference>
<dbReference type="UCSC" id="uc002zel.4">
    <molecule id="P17858-1"/>
    <property type="organism name" value="human"/>
</dbReference>
<dbReference type="AGR" id="HGNC:8876"/>
<dbReference type="CTD" id="5211"/>
<dbReference type="DisGeNET" id="5211"/>
<dbReference type="GeneCards" id="PFKL"/>
<dbReference type="HGNC" id="HGNC:8876">
    <property type="gene designation" value="PFKL"/>
</dbReference>
<dbReference type="HPA" id="ENSG00000141959">
    <property type="expression patterns" value="Low tissue specificity"/>
</dbReference>
<dbReference type="MalaCards" id="PFKL"/>
<dbReference type="MIM" id="171860">
    <property type="type" value="gene"/>
</dbReference>
<dbReference type="neXtProt" id="NX_P17858"/>
<dbReference type="OpenTargets" id="ENSG00000141959"/>
<dbReference type="PharmGKB" id="PA33215"/>
<dbReference type="VEuPathDB" id="HostDB:ENSG00000141959"/>
<dbReference type="eggNOG" id="KOG2440">
    <property type="taxonomic scope" value="Eukaryota"/>
</dbReference>
<dbReference type="GeneTree" id="ENSGT00940000159292"/>
<dbReference type="HOGENOM" id="CLU_011053_0_0_1"/>
<dbReference type="InParanoid" id="P17858"/>
<dbReference type="OMA" id="LMECVDM"/>
<dbReference type="OrthoDB" id="537915at2759"/>
<dbReference type="PAN-GO" id="P17858">
    <property type="GO annotations" value="11 GO annotations based on evolutionary models"/>
</dbReference>
<dbReference type="PhylomeDB" id="P17858"/>
<dbReference type="TreeFam" id="TF300411"/>
<dbReference type="BioCyc" id="MetaCyc:HS06881-MONOMER"/>
<dbReference type="BRENDA" id="2.7.1.11">
    <property type="organism ID" value="2681"/>
</dbReference>
<dbReference type="PathwayCommons" id="P17858"/>
<dbReference type="Reactome" id="R-HSA-6798695">
    <property type="pathway name" value="Neutrophil degranulation"/>
</dbReference>
<dbReference type="Reactome" id="R-HSA-70171">
    <property type="pathway name" value="Glycolysis"/>
</dbReference>
<dbReference type="SABIO-RK" id="P17858"/>
<dbReference type="SignaLink" id="P17858"/>
<dbReference type="SIGNOR" id="P17858"/>
<dbReference type="UniPathway" id="UPA00109">
    <property type="reaction ID" value="UER00182"/>
</dbReference>
<dbReference type="BioGRID-ORCS" id="5211">
    <property type="hits" value="17 hits in 1157 CRISPR screens"/>
</dbReference>
<dbReference type="CD-CODE" id="FB4E32DD">
    <property type="entry name" value="Presynaptic clusters and postsynaptic densities"/>
</dbReference>
<dbReference type="ChiTaRS" id="PFKL">
    <property type="organism name" value="human"/>
</dbReference>
<dbReference type="GeneWiki" id="PFKL"/>
<dbReference type="GenomeRNAi" id="5211"/>
<dbReference type="Pharos" id="P17858">
    <property type="development level" value="Tbio"/>
</dbReference>
<dbReference type="PRO" id="PR:P17858"/>
<dbReference type="Proteomes" id="UP000005640">
    <property type="component" value="Chromosome 21"/>
</dbReference>
<dbReference type="RNAct" id="P17858">
    <property type="molecule type" value="protein"/>
</dbReference>
<dbReference type="Bgee" id="ENSG00000141959">
    <property type="expression patterns" value="Expressed in mucosa of transverse colon and 197 other cell types or tissues"/>
</dbReference>
<dbReference type="ExpressionAtlas" id="P17858">
    <property type="expression patterns" value="baseline and differential"/>
</dbReference>
<dbReference type="GO" id="GO:0005945">
    <property type="term" value="C:6-phosphofructokinase complex"/>
    <property type="evidence" value="ECO:0000314"/>
    <property type="project" value="UniProtKB"/>
</dbReference>
<dbReference type="GO" id="GO:0005829">
    <property type="term" value="C:cytosol"/>
    <property type="evidence" value="ECO:0007005"/>
    <property type="project" value="UniProtKB"/>
</dbReference>
<dbReference type="GO" id="GO:0070062">
    <property type="term" value="C:extracellular exosome"/>
    <property type="evidence" value="ECO:0007005"/>
    <property type="project" value="UniProtKB"/>
</dbReference>
<dbReference type="GO" id="GO:0005576">
    <property type="term" value="C:extracellular region"/>
    <property type="evidence" value="ECO:0000304"/>
    <property type="project" value="Reactome"/>
</dbReference>
<dbReference type="GO" id="GO:1904813">
    <property type="term" value="C:ficolin-1-rich granule lumen"/>
    <property type="evidence" value="ECO:0000304"/>
    <property type="project" value="Reactome"/>
</dbReference>
<dbReference type="GO" id="GO:0016020">
    <property type="term" value="C:membrane"/>
    <property type="evidence" value="ECO:0007005"/>
    <property type="project" value="UniProtKB"/>
</dbReference>
<dbReference type="GO" id="GO:0034774">
    <property type="term" value="C:secretory granule lumen"/>
    <property type="evidence" value="ECO:0000304"/>
    <property type="project" value="Reactome"/>
</dbReference>
<dbReference type="GO" id="GO:0003872">
    <property type="term" value="F:6-phosphofructokinase activity"/>
    <property type="evidence" value="ECO:0000314"/>
    <property type="project" value="UniProtKB"/>
</dbReference>
<dbReference type="GO" id="GO:0005524">
    <property type="term" value="F:ATP binding"/>
    <property type="evidence" value="ECO:0000314"/>
    <property type="project" value="UniProtKB"/>
</dbReference>
<dbReference type="GO" id="GO:0070061">
    <property type="term" value="F:fructose binding"/>
    <property type="evidence" value="ECO:0000314"/>
    <property type="project" value="BHF-UCL"/>
</dbReference>
<dbReference type="GO" id="GO:0070095">
    <property type="term" value="F:fructose-6-phosphate binding"/>
    <property type="evidence" value="ECO:0000314"/>
    <property type="project" value="BHF-UCL"/>
</dbReference>
<dbReference type="GO" id="GO:0042802">
    <property type="term" value="F:identical protein binding"/>
    <property type="evidence" value="ECO:0000353"/>
    <property type="project" value="IntAct"/>
</dbReference>
<dbReference type="GO" id="GO:0019900">
    <property type="term" value="F:kinase binding"/>
    <property type="evidence" value="ECO:0000353"/>
    <property type="project" value="BHF-UCL"/>
</dbReference>
<dbReference type="GO" id="GO:0046872">
    <property type="term" value="F:metal ion binding"/>
    <property type="evidence" value="ECO:0007669"/>
    <property type="project" value="UniProtKB-KW"/>
</dbReference>
<dbReference type="GO" id="GO:0061621">
    <property type="term" value="P:canonical glycolysis"/>
    <property type="evidence" value="ECO:0000318"/>
    <property type="project" value="GO_Central"/>
</dbReference>
<dbReference type="GO" id="GO:0030388">
    <property type="term" value="P:fructose 1,6-bisphosphate metabolic process"/>
    <property type="evidence" value="ECO:0000314"/>
    <property type="project" value="UniProtKB"/>
</dbReference>
<dbReference type="GO" id="GO:0006002">
    <property type="term" value="P:fructose 6-phosphate metabolic process"/>
    <property type="evidence" value="ECO:0000314"/>
    <property type="project" value="UniProtKB"/>
</dbReference>
<dbReference type="GO" id="GO:0006096">
    <property type="term" value="P:glycolytic process"/>
    <property type="evidence" value="ECO:0000314"/>
    <property type="project" value="UniProtKB"/>
</dbReference>
<dbReference type="GO" id="GO:0046676">
    <property type="term" value="P:negative regulation of insulin secretion"/>
    <property type="evidence" value="ECO:0007669"/>
    <property type="project" value="Ensembl"/>
</dbReference>
<dbReference type="GO" id="GO:0009749">
    <property type="term" value="P:response to glucose"/>
    <property type="evidence" value="ECO:0000314"/>
    <property type="project" value="UniProtKB"/>
</dbReference>
<dbReference type="CDD" id="cd00764">
    <property type="entry name" value="Eukaryotic_PFK"/>
    <property type="match status" value="1"/>
</dbReference>
<dbReference type="FunFam" id="3.40.50.460:FF:000001">
    <property type="entry name" value="ATP-dependent 6-phosphofructokinase"/>
    <property type="match status" value="1"/>
</dbReference>
<dbReference type="FunFam" id="3.40.50.460:FF:000003">
    <property type="entry name" value="ATP-dependent 6-phosphofructokinase"/>
    <property type="match status" value="1"/>
</dbReference>
<dbReference type="FunFam" id="3.40.50.450:FF:000043">
    <property type="entry name" value="ATP-dependent 6-phosphofructokinase, platelet type"/>
    <property type="match status" value="1"/>
</dbReference>
<dbReference type="Gene3D" id="3.40.50.450">
    <property type="match status" value="2"/>
</dbReference>
<dbReference type="Gene3D" id="3.40.50.460">
    <property type="entry name" value="Phosphofructokinase domain"/>
    <property type="match status" value="2"/>
</dbReference>
<dbReference type="HAMAP" id="MF_03184">
    <property type="entry name" value="Phosphofructokinase_I_E"/>
    <property type="match status" value="1"/>
</dbReference>
<dbReference type="InterPro" id="IPR009161">
    <property type="entry name" value="6-Pfructokinase_euk"/>
</dbReference>
<dbReference type="InterPro" id="IPR022953">
    <property type="entry name" value="ATP_PFK"/>
</dbReference>
<dbReference type="InterPro" id="IPR041914">
    <property type="entry name" value="PFK_vert-type"/>
</dbReference>
<dbReference type="InterPro" id="IPR015912">
    <property type="entry name" value="Phosphofructokinase_CS"/>
</dbReference>
<dbReference type="InterPro" id="IPR000023">
    <property type="entry name" value="Phosphofructokinase_dom"/>
</dbReference>
<dbReference type="InterPro" id="IPR035966">
    <property type="entry name" value="PKF_sf"/>
</dbReference>
<dbReference type="NCBIfam" id="TIGR02478">
    <property type="entry name" value="6PF1K_euk"/>
    <property type="match status" value="1"/>
</dbReference>
<dbReference type="NCBIfam" id="NF002872">
    <property type="entry name" value="PRK03202.1"/>
    <property type="match status" value="1"/>
</dbReference>
<dbReference type="PANTHER" id="PTHR13697:SF14">
    <property type="entry name" value="ATP-DEPENDENT 6-PHOSPHOFRUCTOKINASE, LIVER TYPE"/>
    <property type="match status" value="1"/>
</dbReference>
<dbReference type="PANTHER" id="PTHR13697">
    <property type="entry name" value="PHOSPHOFRUCTOKINASE"/>
    <property type="match status" value="1"/>
</dbReference>
<dbReference type="Pfam" id="PF00365">
    <property type="entry name" value="PFK"/>
    <property type="match status" value="2"/>
</dbReference>
<dbReference type="PIRSF" id="PIRSF000533">
    <property type="entry name" value="ATP_PFK_euk"/>
    <property type="match status" value="1"/>
</dbReference>
<dbReference type="PRINTS" id="PR00476">
    <property type="entry name" value="PHFRCTKINASE"/>
</dbReference>
<dbReference type="SUPFAM" id="SSF53784">
    <property type="entry name" value="Phosphofructokinase"/>
    <property type="match status" value="2"/>
</dbReference>
<dbReference type="PROSITE" id="PS00433">
    <property type="entry name" value="PHOSPHOFRUCTOKINASE"/>
    <property type="match status" value="2"/>
</dbReference>
<organism>
    <name type="scientific">Homo sapiens</name>
    <name type="common">Human</name>
    <dbReference type="NCBI Taxonomy" id="9606"/>
    <lineage>
        <taxon>Eukaryota</taxon>
        <taxon>Metazoa</taxon>
        <taxon>Chordata</taxon>
        <taxon>Craniata</taxon>
        <taxon>Vertebrata</taxon>
        <taxon>Euteleostomi</taxon>
        <taxon>Mammalia</taxon>
        <taxon>Eutheria</taxon>
        <taxon>Euarchontoglires</taxon>
        <taxon>Primates</taxon>
        <taxon>Haplorrhini</taxon>
        <taxon>Catarrhini</taxon>
        <taxon>Hominidae</taxon>
        <taxon>Homo</taxon>
    </lineage>
</organism>
<accession>P17858</accession>
<accession>Q96A64</accession>
<accession>Q96IH4</accession>
<accession>Q9BR91</accession>
<feature type="initiator methionine" description="Removed" evidence="7 13 14">
    <location>
        <position position="1"/>
    </location>
</feature>
<feature type="chain" id="PRO_0000112021" description="ATP-dependent 6-phosphofructokinase, liver type">
    <location>
        <begin position="2"/>
        <end position="780"/>
    </location>
</feature>
<feature type="region of interest" description="N-terminal catalytic PFK domain 1">
    <location>
        <begin position="2"/>
        <end position="390"/>
    </location>
</feature>
<feature type="region of interest" description="Interdomain linker">
    <location>
        <begin position="391"/>
        <end position="400"/>
    </location>
</feature>
<feature type="region of interest" description="C-terminal regulatory PFK domain 2">
    <location>
        <begin position="401"/>
        <end position="780"/>
    </location>
</feature>
<feature type="active site" description="Proton acceptor" evidence="3">
    <location>
        <position position="166"/>
    </location>
</feature>
<feature type="binding site" evidence="3">
    <location>
        <position position="25"/>
    </location>
    <ligand>
        <name>ATP</name>
        <dbReference type="ChEBI" id="CHEBI:30616"/>
    </ligand>
</feature>
<feature type="binding site" evidence="3">
    <location>
        <begin position="88"/>
        <end position="89"/>
    </location>
    <ligand>
        <name>ATP</name>
        <dbReference type="ChEBI" id="CHEBI:30616"/>
    </ligand>
</feature>
<feature type="binding site" evidence="3">
    <location>
        <begin position="118"/>
        <end position="121"/>
    </location>
    <ligand>
        <name>ATP</name>
        <dbReference type="ChEBI" id="CHEBI:30616"/>
    </ligand>
</feature>
<feature type="binding site" evidence="3">
    <location>
        <position position="119"/>
    </location>
    <ligand>
        <name>Mg(2+)</name>
        <dbReference type="ChEBI" id="CHEBI:18420"/>
        <note>catalytic</note>
    </ligand>
</feature>
<feature type="binding site" description="in other chain" evidence="3">
    <location>
        <begin position="164"/>
        <end position="166"/>
    </location>
    <ligand>
        <name>substrate</name>
        <note>ligand shared between dimeric partners</note>
    </ligand>
</feature>
<feature type="binding site" evidence="3">
    <location>
        <position position="201"/>
    </location>
    <ligand>
        <name>substrate</name>
        <note>ligand shared between dimeric partners</note>
    </ligand>
</feature>
<feature type="binding site" description="in other chain" evidence="3">
    <location>
        <begin position="208"/>
        <end position="210"/>
    </location>
    <ligand>
        <name>substrate</name>
        <note>ligand shared between dimeric partners</note>
    </ligand>
</feature>
<feature type="binding site" description="in other chain" evidence="3">
    <location>
        <position position="264"/>
    </location>
    <ligand>
        <name>substrate</name>
        <note>ligand shared between dimeric partners</note>
    </ligand>
</feature>
<feature type="binding site" evidence="3">
    <location>
        <position position="292"/>
    </location>
    <ligand>
        <name>substrate</name>
        <note>ligand shared between dimeric partners</note>
    </ligand>
</feature>
<feature type="binding site" description="in other chain" evidence="3">
    <location>
        <begin position="298"/>
        <end position="301"/>
    </location>
    <ligand>
        <name>substrate</name>
        <note>ligand shared between dimeric partners</note>
    </ligand>
</feature>
<feature type="binding site" description="in other chain" evidence="3">
    <location>
        <position position="470"/>
    </location>
    <ligand>
        <name>beta-D-fructose 2,6-bisphosphate</name>
        <dbReference type="ChEBI" id="CHEBI:58579"/>
        <note>allosteric activator; ligand shared between dimeric partners</note>
    </ligand>
</feature>
<feature type="binding site" description="in other chain" evidence="3">
    <location>
        <begin position="527"/>
        <end position="531"/>
    </location>
    <ligand>
        <name>beta-D-fructose 2,6-bisphosphate</name>
        <dbReference type="ChEBI" id="CHEBI:58579"/>
        <note>allosteric activator; ligand shared between dimeric partners</note>
    </ligand>
</feature>
<feature type="binding site" evidence="3">
    <location>
        <position position="565"/>
    </location>
    <ligand>
        <name>beta-D-fructose 2,6-bisphosphate</name>
        <dbReference type="ChEBI" id="CHEBI:58579"/>
        <note>allosteric activator; ligand shared between dimeric partners</note>
    </ligand>
</feature>
<feature type="binding site" description="in other chain" evidence="3">
    <location>
        <begin position="572"/>
        <end position="574"/>
    </location>
    <ligand>
        <name>beta-D-fructose 2,6-bisphosphate</name>
        <dbReference type="ChEBI" id="CHEBI:58579"/>
        <note>allosteric activator; ligand shared between dimeric partners</note>
    </ligand>
</feature>
<feature type="binding site" description="in other chain" evidence="3">
    <location>
        <position position="628"/>
    </location>
    <ligand>
        <name>beta-D-fructose 2,6-bisphosphate</name>
        <dbReference type="ChEBI" id="CHEBI:58579"/>
        <note>allosteric activator; ligand shared between dimeric partners</note>
    </ligand>
</feature>
<feature type="binding site" evidence="3">
    <location>
        <position position="654"/>
    </location>
    <ligand>
        <name>beta-D-fructose 2,6-bisphosphate</name>
        <dbReference type="ChEBI" id="CHEBI:58579"/>
        <note>allosteric activator; ligand shared between dimeric partners</note>
    </ligand>
</feature>
<feature type="binding site" description="in other chain" evidence="3">
    <location>
        <begin position="660"/>
        <end position="663"/>
    </location>
    <ligand>
        <name>beta-D-fructose 2,6-bisphosphate</name>
        <dbReference type="ChEBI" id="CHEBI:58579"/>
        <note>allosteric activator; ligand shared between dimeric partners</note>
    </ligand>
</feature>
<feature type="binding site" description="in other chain" evidence="3">
    <location>
        <position position="734"/>
    </location>
    <ligand>
        <name>beta-D-fructose 2,6-bisphosphate</name>
        <dbReference type="ChEBI" id="CHEBI:58579"/>
        <note>allosteric activator; ligand shared between dimeric partners</note>
    </ligand>
</feature>
<feature type="modified residue" description="N-acetylalanine" evidence="7 13 14">
    <location>
        <position position="2"/>
    </location>
</feature>
<feature type="modified residue" description="Phosphoserine" evidence="2">
    <location>
        <position position="377"/>
    </location>
</feature>
<feature type="modified residue" description="Phosphotyrosine" evidence="1">
    <location>
        <position position="640"/>
    </location>
</feature>
<feature type="modified residue" description="Phosphoserine" evidence="12">
    <location>
        <position position="775"/>
    </location>
</feature>
<feature type="glycosylation site" description="O-linked (GlcNAc) serine" evidence="5">
    <location>
        <position position="529"/>
    </location>
</feature>
<feature type="splice variant" id="VSP_011854" description="In isoform 2." evidence="8">
    <original>MAAVDLEKLRASGAGKAIGVLTSGGDAQ</original>
    <variation>MCNQGRGRESSRGGLHVQGSCRGLSRSPQQETGFAKAPAGTDCFFHCSPGSRGQGDRKEEVTSEPGGTSIMSRLG</variation>
    <location>
        <begin position="1"/>
        <end position="28"/>
    </location>
</feature>
<feature type="sequence variant" id="VAR_006070" evidence="4">
    <original>G</original>
    <variation>A</variation>
    <location>
        <position position="81"/>
    </location>
</feature>
<feature type="sequence variant" id="VAR_006071" description="In dbSNP:rs755851304." evidence="6">
    <original>R</original>
    <variation>W</variation>
    <location>
        <position position="151"/>
    </location>
</feature>
<feature type="sequence variant" id="VAR_030872" description="In dbSNP:rs1057037.">
    <original>D</original>
    <variation>V</variation>
    <location>
        <position position="237"/>
    </location>
</feature>
<feature type="mutagenesis site" description="Does not affect GlcNAcylation." evidence="5">
    <original>T</original>
    <variation>A</variation>
    <location>
        <position position="527"/>
    </location>
</feature>
<feature type="mutagenesis site" description="Prevents GlcNAcylation and enhance enzyme activity." evidence="5">
    <original>S</original>
    <variation>A</variation>
    <location>
        <position position="529"/>
    </location>
</feature>
<feature type="sequence conflict" description="In Ref. 1; CAA33597 and 2; CAB46744." evidence="9" ref="1 2">
    <original>A</original>
    <variation>R</variation>
    <location>
        <position position="27"/>
    </location>
</feature>
<feature type="sequence conflict" description="In Ref. 2; CAB46744." evidence="9" ref="2">
    <original>S</original>
    <variation>T</variation>
    <location>
        <position position="86"/>
    </location>
</feature>
<feature type="sequence conflict" description="In Ref. 1; CAA33597 and 2; CAB46744." evidence="9" ref="1 2">
    <original>C</original>
    <variation>S</variation>
    <location>
        <position position="89"/>
    </location>
</feature>
<feature type="sequence conflict" description="In Ref. 2; CAB46744." evidence="9" ref="2">
    <original>Y</original>
    <variation>N</variation>
    <location>
        <position position="103"/>
    </location>
</feature>
<feature type="sequence conflict" description="In Ref. 2; CAB46744." evidence="9" ref="2">
    <original>E</original>
    <variation>EAPPE</variation>
    <location>
        <position position="236"/>
    </location>
</feature>
<feature type="sequence conflict" description="In Ref. 2; CAB46744." evidence="9" ref="2">
    <original>K</original>
    <variation>R</variation>
    <location>
        <position position="386"/>
    </location>
</feature>
<feature type="sequence conflict" description="In Ref. 1; CAA33597 and 2; CAB46744." evidence="9" ref="1 2">
    <original>A</original>
    <variation>T</variation>
    <location>
        <position position="389"/>
    </location>
</feature>
<feature type="sequence conflict" description="In Ref. 4; AAH08964/AAH09919." evidence="9" ref="4">
    <original>K</original>
    <variation>N</variation>
    <location>
        <position position="648"/>
    </location>
</feature>
<feature type="sequence conflict" description="In Ref. 4; AAH08964/AAH09919." evidence="9" ref="4">
    <original>V</original>
    <variation>A</variation>
    <location>
        <position position="717"/>
    </location>
</feature>
<feature type="strand" evidence="17">
    <location>
        <begin position="17"/>
        <end position="22"/>
    </location>
</feature>
<feature type="helix" evidence="17">
    <location>
        <begin position="30"/>
        <end position="43"/>
    </location>
</feature>
<feature type="strand" evidence="17">
    <location>
        <begin position="47"/>
        <end position="51"/>
    </location>
</feature>
<feature type="turn" evidence="17">
    <location>
        <begin position="52"/>
        <end position="54"/>
    </location>
</feature>
<feature type="helix" evidence="17">
    <location>
        <begin position="55"/>
        <end position="60"/>
    </location>
</feature>
<feature type="helix" evidence="17">
    <location>
        <begin position="62"/>
        <end position="64"/>
    </location>
</feature>
<feature type="strand" evidence="17">
    <location>
        <begin position="65"/>
        <end position="67"/>
    </location>
</feature>
<feature type="helix" evidence="17">
    <location>
        <begin position="70"/>
        <end position="73"/>
    </location>
</feature>
<feature type="helix" evidence="17">
    <location>
        <begin position="91"/>
        <end position="93"/>
    </location>
</feature>
<feature type="helix" evidence="17">
    <location>
        <begin position="95"/>
        <end position="107"/>
    </location>
</feature>
<feature type="strand" evidence="17">
    <location>
        <begin position="112"/>
        <end position="117"/>
    </location>
</feature>
<feature type="helix" evidence="17">
    <location>
        <begin position="119"/>
        <end position="130"/>
    </location>
</feature>
<feature type="helix" evidence="17">
    <location>
        <begin position="132"/>
        <end position="142"/>
    </location>
</feature>
<feature type="turn" evidence="17">
    <location>
        <begin position="148"/>
        <end position="150"/>
    </location>
</feature>
<feature type="strand" evidence="17">
    <location>
        <begin position="157"/>
        <end position="163"/>
    </location>
</feature>
<feature type="helix" evidence="17">
    <location>
        <begin position="178"/>
        <end position="193"/>
    </location>
</feature>
<feature type="strand" evidence="17">
    <location>
        <begin position="201"/>
        <end position="207"/>
    </location>
</feature>
<feature type="helix" evidence="17">
    <location>
        <begin position="214"/>
        <end position="223"/>
    </location>
</feature>
<feature type="strand" evidence="17">
    <location>
        <begin position="226"/>
        <end position="230"/>
    </location>
</feature>
<feature type="helix" evidence="17">
    <location>
        <begin position="239"/>
        <end position="253"/>
    </location>
</feature>
<feature type="strand" evidence="17">
    <location>
        <begin position="257"/>
        <end position="263"/>
    </location>
</feature>
<feature type="strand" evidence="17">
    <location>
        <begin position="269"/>
        <end position="271"/>
    </location>
</feature>
<feature type="helix" evidence="17">
    <location>
        <begin position="276"/>
        <end position="287"/>
    </location>
</feature>
<feature type="strand" evidence="17">
    <location>
        <begin position="290"/>
        <end position="295"/>
    </location>
</feature>
<feature type="helix" evidence="17">
    <location>
        <begin position="297"/>
        <end position="301"/>
    </location>
</feature>
<feature type="helix" evidence="17">
    <location>
        <begin position="307"/>
        <end position="325"/>
    </location>
</feature>
<feature type="strand" evidence="17">
    <location>
        <begin position="334"/>
        <end position="339"/>
    </location>
</feature>
<feature type="strand" evidence="17">
    <location>
        <begin position="342"/>
        <end position="347"/>
    </location>
</feature>
<feature type="helix" evidence="17">
    <location>
        <begin position="348"/>
        <end position="362"/>
    </location>
</feature>
<feature type="turn" evidence="18">
    <location>
        <begin position="363"/>
        <end position="365"/>
    </location>
</feature>
<feature type="helix" evidence="17">
    <location>
        <begin position="367"/>
        <end position="369"/>
    </location>
</feature>
<feature type="helix" evidence="17">
    <location>
        <begin position="370"/>
        <end position="373"/>
    </location>
</feature>
<feature type="helix" evidence="17">
    <location>
        <begin position="376"/>
        <end position="389"/>
    </location>
</feature>
<feature type="strand" evidence="17">
    <location>
        <begin position="401"/>
        <end position="409"/>
    </location>
</feature>
<feature type="helix" evidence="17">
    <location>
        <begin position="414"/>
        <end position="427"/>
    </location>
</feature>
<feature type="strand" evidence="17">
    <location>
        <begin position="431"/>
        <end position="435"/>
    </location>
</feature>
<feature type="turn" evidence="17">
    <location>
        <begin position="436"/>
        <end position="438"/>
    </location>
</feature>
<feature type="helix" evidence="17">
    <location>
        <begin position="439"/>
        <end position="443"/>
    </location>
</feature>
<feature type="strand" evidence="17">
    <location>
        <begin position="447"/>
        <end position="449"/>
    </location>
</feature>
<feature type="helix" evidence="17">
    <location>
        <begin position="453"/>
        <end position="455"/>
    </location>
</feature>
<feature type="helix" evidence="16">
    <location>
        <begin position="458"/>
        <end position="460"/>
    </location>
</feature>
<feature type="helix" evidence="17">
    <location>
        <begin position="473"/>
        <end position="476"/>
    </location>
</feature>
<feature type="helix" evidence="17">
    <location>
        <begin position="477"/>
        <end position="487"/>
    </location>
</feature>
<feature type="strand" evidence="17">
    <location>
        <begin position="491"/>
        <end position="497"/>
    </location>
</feature>
<feature type="helix" evidence="17">
    <location>
        <begin position="498"/>
        <end position="510"/>
    </location>
</feature>
<feature type="turn" evidence="17">
    <location>
        <begin position="511"/>
        <end position="513"/>
    </location>
</feature>
<feature type="helix" evidence="17">
    <location>
        <begin position="515"/>
        <end position="517"/>
    </location>
</feature>
<feature type="strand" evidence="17">
    <location>
        <begin position="519"/>
        <end position="525"/>
    </location>
</feature>
<feature type="helix" evidence="17">
    <location>
        <begin position="541"/>
        <end position="556"/>
    </location>
</feature>
<feature type="strand" evidence="17">
    <location>
        <begin position="565"/>
        <end position="571"/>
    </location>
</feature>
<feature type="helix" evidence="17">
    <location>
        <begin position="578"/>
        <end position="587"/>
    </location>
</feature>
<feature type="strand" evidence="17">
    <location>
        <begin position="590"/>
        <end position="593"/>
    </location>
</feature>
<feature type="helix" evidence="17">
    <location>
        <begin position="601"/>
        <end position="615"/>
    </location>
</feature>
<feature type="strand" evidence="17">
    <location>
        <begin position="621"/>
        <end position="627"/>
    </location>
</feature>
<feature type="strand" evidence="17">
    <location>
        <begin position="632"/>
        <end position="634"/>
    </location>
</feature>
<feature type="helix" evidence="17">
    <location>
        <begin position="636"/>
        <end position="646"/>
    </location>
</feature>
<feature type="turn" evidence="17">
    <location>
        <begin position="647"/>
        <end position="650"/>
    </location>
</feature>
<feature type="strand" evidence="17">
    <location>
        <begin position="652"/>
        <end position="657"/>
    </location>
</feature>
<feature type="helix" evidence="17">
    <location>
        <begin position="660"/>
        <end position="662"/>
    </location>
</feature>
<feature type="helix" evidence="17">
    <location>
        <begin position="669"/>
        <end position="693"/>
    </location>
</feature>
<feature type="strand" evidence="15">
    <location>
        <begin position="695"/>
        <end position="698"/>
    </location>
</feature>
<feature type="helix" evidence="17">
    <location>
        <begin position="704"/>
        <end position="706"/>
    </location>
</feature>
<feature type="strand" evidence="17">
    <location>
        <begin position="707"/>
        <end position="709"/>
    </location>
</feature>
<feature type="strand" evidence="15">
    <location>
        <begin position="714"/>
        <end position="721"/>
    </location>
</feature>
<feature type="helix" evidence="17">
    <location>
        <begin position="722"/>
        <end position="725"/>
    </location>
</feature>
<feature type="turn" evidence="17">
    <location>
        <begin position="726"/>
        <end position="728"/>
    </location>
</feature>
<feature type="turn" evidence="17">
    <location>
        <begin position="731"/>
        <end position="734"/>
    </location>
</feature>
<feature type="strand" evidence="17">
    <location>
        <begin position="735"/>
        <end position="738"/>
    </location>
</feature>
<feature type="helix" evidence="17">
    <location>
        <begin position="740"/>
        <end position="743"/>
    </location>
</feature>
<feature type="helix" evidence="17">
    <location>
        <begin position="744"/>
        <end position="751"/>
    </location>
</feature>